<organism>
    <name type="scientific">Mus musculus</name>
    <name type="common">Mouse</name>
    <dbReference type="NCBI Taxonomy" id="10090"/>
    <lineage>
        <taxon>Eukaryota</taxon>
        <taxon>Metazoa</taxon>
        <taxon>Chordata</taxon>
        <taxon>Craniata</taxon>
        <taxon>Vertebrata</taxon>
        <taxon>Euteleostomi</taxon>
        <taxon>Mammalia</taxon>
        <taxon>Eutheria</taxon>
        <taxon>Euarchontoglires</taxon>
        <taxon>Glires</taxon>
        <taxon>Rodentia</taxon>
        <taxon>Myomorpha</taxon>
        <taxon>Muroidea</taxon>
        <taxon>Muridae</taxon>
        <taxon>Murinae</taxon>
        <taxon>Mus</taxon>
        <taxon>Mus</taxon>
    </lineage>
</organism>
<proteinExistence type="evidence at protein level"/>
<feature type="transit peptide" description="Mitochondrion" evidence="2">
    <location>
        <begin position="1"/>
        <end position="38"/>
    </location>
</feature>
<feature type="chain" id="PRO_0000071138" description="DnaJ homolog subfamily C member 30, mitochondrial" evidence="2">
    <location>
        <begin position="39"/>
        <end position="219"/>
    </location>
</feature>
<feature type="transmembrane region" description="Helical" evidence="2">
    <location>
        <begin position="202"/>
        <end position="218"/>
    </location>
</feature>
<feature type="domain" description="J" evidence="3">
    <location>
        <begin position="42"/>
        <end position="107"/>
    </location>
</feature>
<feature type="region of interest" description="Disordered" evidence="4">
    <location>
        <begin position="109"/>
        <end position="148"/>
    </location>
</feature>
<feature type="compositionally biased region" description="Pro residues" evidence="4">
    <location>
        <begin position="127"/>
        <end position="138"/>
    </location>
</feature>
<protein>
    <recommendedName>
        <fullName evidence="7">DnaJ homolog subfamily C member 30, mitochondrial</fullName>
    </recommendedName>
    <alternativeName>
        <fullName evidence="6">Williams-Beuren syndrome chromosomal region 18 protein homolog</fullName>
    </alternativeName>
</protein>
<accession>P59041</accession>
<reference key="1">
    <citation type="journal article" date="2002" name="Hum. Genet.">
        <title>Identification of additional transcripts in the Williams-Beuren syndrome critical region.</title>
        <authorList>
            <person name="Merla G."/>
            <person name="Ucla C."/>
            <person name="Guipponi M."/>
            <person name="Reymond A."/>
        </authorList>
    </citation>
    <scope>NUCLEOTIDE SEQUENCE [MRNA]</scope>
</reference>
<reference key="2">
    <citation type="journal article" date="2010" name="Cell">
        <title>A tissue-specific atlas of mouse protein phosphorylation and expression.</title>
        <authorList>
            <person name="Huttlin E.L."/>
            <person name="Jedrychowski M.P."/>
            <person name="Elias J.E."/>
            <person name="Goswami T."/>
            <person name="Rad R."/>
            <person name="Beausoleil S.A."/>
            <person name="Villen J."/>
            <person name="Haas W."/>
            <person name="Sowa M.E."/>
            <person name="Gygi S.P."/>
        </authorList>
    </citation>
    <scope>IDENTIFICATION BY MASS SPECTROMETRY [LARGE SCALE ANALYSIS]</scope>
    <source>
        <tissue>Brown adipose tissue</tissue>
        <tissue>Kidney</tissue>
    </source>
</reference>
<reference key="3">
    <citation type="journal article" date="2018" name="Cell">
        <title>The 7q11.23 protein DNAJC30 interacts with ATP synthase and links mitochondria to brain development.</title>
        <authorList>
            <person name="Tebbenkamp A.T.N."/>
            <person name="Varela L."/>
            <person name="Choi J."/>
            <person name="Paredes M.I."/>
            <person name="Giani A.M."/>
            <person name="Song J.E."/>
            <person name="Sestan-Pesa M."/>
            <person name="Franjic D."/>
            <person name="Sousa A.M.M."/>
            <person name="Liu Z.W."/>
            <person name="Li M."/>
            <person name="Bichsel C."/>
            <person name="Koch M."/>
            <person name="Szigeti-Buck K."/>
            <person name="Liu F."/>
            <person name="Li Z."/>
            <person name="Kawasawa Y.I."/>
            <person name="Paspalas C.D."/>
            <person name="Mineur Y.S."/>
            <person name="Prontera P."/>
            <person name="Merla G."/>
            <person name="Picciotto M.R."/>
            <person name="Arnsten A.F.T."/>
            <person name="Horvath T.L."/>
            <person name="Sestan N."/>
        </authorList>
    </citation>
    <scope>FUNCTION</scope>
    <scope>TISSUE SPECIFICITY</scope>
    <scope>DISRUPTION PHENOTYPE</scope>
</reference>
<sequence length="219" mass="24762">MAAARCLGWTLSPLWRWWQVRGLPPSSATGLCSRGRTYSRTALYELLGVPSTATQAQIKAAYYRQSFLYHPDRNPGSAEAAERFTRVSEAYLVLGSTILRRKYDRGLLSDQDLRGPGVKPSKTPVADPAPPRPPPYTPRAPGGSRASPGDGRTMFDFDAFYQAHYGEQLERERRLRARREALRKKQENQANKGTSWDDTRDATFFVVLFLIFVFVGFRI</sequence>
<comment type="function">
    <text evidence="1 5">Mitochondrial protein enriched in neurons that acts as a regulator of mitochondrial respiration (PubMed:30318146). Associates with the ATP synthase complex and facilitates ATP synthesis (PubMed:30318146). May be a chaperone protein involved in the turnover of the subunits of mitochondrial complex I N-module. It facilitates the degradation of N-module subunits damaged by oxidative stress, and contributes to complex I functional efficiency (By similarity).</text>
</comment>
<comment type="subunit">
    <text evidence="1">Associates with the ATP synthase complex. Interacts with MT-ATP6; interaction is direct. Interacts with ATP5MC2; interaction is direct.</text>
</comment>
<comment type="subcellular location">
    <subcellularLocation>
        <location evidence="1">Mitochondrion inner membrane</location>
        <topology evidence="2">Single-pass membrane protein</topology>
    </subcellularLocation>
</comment>
<comment type="tissue specificity">
    <text evidence="5">In brain, expressed in gray matter structures.</text>
</comment>
<comment type="disruption phenotype">
    <text evidence="5">Mice are smaller and have a decreased weight (PubMed:30318146). Neocortical projection neurons display morphological defects reminiscent of Williams-Beuren syndrome (WBS) in human, characterized by less complex dendritic architecture and a smaller corpus callosum (PubMed:30318146). Mitochondria show decreased ATP production (PubMed:30318146). Mice do not show significant systemic metabolic defects (PubMed:30318146).</text>
</comment>
<dbReference type="EMBL" id="AF412026">
    <property type="protein sequence ID" value="AAM62308.1"/>
    <property type="molecule type" value="mRNA"/>
</dbReference>
<dbReference type="CCDS" id="CCDS39315.1"/>
<dbReference type="RefSeq" id="NP_079638.2">
    <property type="nucleotide sequence ID" value="NM_025362.3"/>
</dbReference>
<dbReference type="SMR" id="P59041"/>
<dbReference type="FunCoup" id="P59041">
    <property type="interactions" value="1096"/>
</dbReference>
<dbReference type="STRING" id="10090.ENSMUSP00000094318"/>
<dbReference type="iPTMnet" id="P59041"/>
<dbReference type="PhosphoSitePlus" id="P59041"/>
<dbReference type="SwissPalm" id="P59041"/>
<dbReference type="PaxDb" id="10090-ENSMUSP00000094318"/>
<dbReference type="PeptideAtlas" id="P59041"/>
<dbReference type="ProteomicsDB" id="279716"/>
<dbReference type="Antibodypedia" id="2642">
    <property type="antibodies" value="87 antibodies from 14 providers"/>
</dbReference>
<dbReference type="DNASU" id="66114"/>
<dbReference type="Ensembl" id="ENSMUST00000071263.7">
    <property type="protein sequence ID" value="ENSMUSP00000094318.4"/>
    <property type="gene ID" value="ENSMUSG00000061118.9"/>
</dbReference>
<dbReference type="GeneID" id="66114"/>
<dbReference type="KEGG" id="mmu:66114"/>
<dbReference type="UCSC" id="uc008zxp.1">
    <property type="organism name" value="mouse"/>
</dbReference>
<dbReference type="AGR" id="MGI:1913364"/>
<dbReference type="CTD" id="84277"/>
<dbReference type="MGI" id="MGI:1913364">
    <property type="gene designation" value="Dnajc30"/>
</dbReference>
<dbReference type="VEuPathDB" id="HostDB:ENSMUSG00000061118"/>
<dbReference type="eggNOG" id="KOG0691">
    <property type="taxonomic scope" value="Eukaryota"/>
</dbReference>
<dbReference type="GeneTree" id="ENSGT00510000048685"/>
<dbReference type="HOGENOM" id="CLU_104327_2_0_1"/>
<dbReference type="InParanoid" id="P59041"/>
<dbReference type="OMA" id="ANRTMFD"/>
<dbReference type="OrthoDB" id="376357at2759"/>
<dbReference type="PhylomeDB" id="P59041"/>
<dbReference type="TreeFam" id="TF332749"/>
<dbReference type="BioGRID-ORCS" id="66114">
    <property type="hits" value="1 hit in 77 CRISPR screens"/>
</dbReference>
<dbReference type="ChiTaRS" id="Dnajc30">
    <property type="organism name" value="mouse"/>
</dbReference>
<dbReference type="PRO" id="PR:P59041"/>
<dbReference type="Proteomes" id="UP000000589">
    <property type="component" value="Chromosome 5"/>
</dbReference>
<dbReference type="RNAct" id="P59041">
    <property type="molecule type" value="protein"/>
</dbReference>
<dbReference type="Bgee" id="ENSMUSG00000061118">
    <property type="expression patterns" value="Expressed in proximal tubule and 64 other cell types or tissues"/>
</dbReference>
<dbReference type="GO" id="GO:0005743">
    <property type="term" value="C:mitochondrial inner membrane"/>
    <property type="evidence" value="ECO:0000250"/>
    <property type="project" value="UniProtKB"/>
</dbReference>
<dbReference type="GO" id="GO:0005739">
    <property type="term" value="C:mitochondrion"/>
    <property type="evidence" value="ECO:0007005"/>
    <property type="project" value="MGI"/>
</dbReference>
<dbReference type="GO" id="GO:0006754">
    <property type="term" value="P:ATP biosynthetic process"/>
    <property type="evidence" value="ECO:0007669"/>
    <property type="project" value="UniProtKB-KW"/>
</dbReference>
<dbReference type="GO" id="GO:0007420">
    <property type="term" value="P:brain development"/>
    <property type="evidence" value="ECO:0000315"/>
    <property type="project" value="UniProtKB"/>
</dbReference>
<dbReference type="GO" id="GO:1905706">
    <property type="term" value="P:regulation of mitochondrial ATP synthesis coupled proton transport"/>
    <property type="evidence" value="ECO:0000315"/>
    <property type="project" value="UniProtKB"/>
</dbReference>
<dbReference type="CDD" id="cd06257">
    <property type="entry name" value="DnaJ"/>
    <property type="match status" value="1"/>
</dbReference>
<dbReference type="FunFam" id="1.10.287.110:FF:000060">
    <property type="entry name" value="DnaJ (Hsp40) homolog, subfamily C, member 30"/>
    <property type="match status" value="1"/>
</dbReference>
<dbReference type="Gene3D" id="1.10.287.110">
    <property type="entry name" value="DnaJ domain"/>
    <property type="match status" value="1"/>
</dbReference>
<dbReference type="InterPro" id="IPR001623">
    <property type="entry name" value="DnaJ_domain"/>
</dbReference>
<dbReference type="InterPro" id="IPR036869">
    <property type="entry name" value="J_dom_sf"/>
</dbReference>
<dbReference type="InterPro" id="IPR053025">
    <property type="entry name" value="Mito_ATP_Synthase-Asso"/>
</dbReference>
<dbReference type="PANTHER" id="PTHR44873">
    <property type="entry name" value="DNAJ HOMOLOG SUBFAMILY C MEMBER 30, MITOCHONDRIAL"/>
    <property type="match status" value="1"/>
</dbReference>
<dbReference type="PANTHER" id="PTHR44873:SF1">
    <property type="entry name" value="DNAJ HOMOLOG SUBFAMILY C MEMBER 30, MITOCHONDRIAL"/>
    <property type="match status" value="1"/>
</dbReference>
<dbReference type="Pfam" id="PF00226">
    <property type="entry name" value="DnaJ"/>
    <property type="match status" value="1"/>
</dbReference>
<dbReference type="PRINTS" id="PR00625">
    <property type="entry name" value="JDOMAIN"/>
</dbReference>
<dbReference type="SMART" id="SM00271">
    <property type="entry name" value="DnaJ"/>
    <property type="match status" value="1"/>
</dbReference>
<dbReference type="SUPFAM" id="SSF46565">
    <property type="entry name" value="Chaperone J-domain"/>
    <property type="match status" value="1"/>
</dbReference>
<dbReference type="PROSITE" id="PS50076">
    <property type="entry name" value="DNAJ_2"/>
    <property type="match status" value="1"/>
</dbReference>
<keyword id="KW-0066">ATP synthesis</keyword>
<keyword id="KW-0143">Chaperone</keyword>
<keyword id="KW-0472">Membrane</keyword>
<keyword id="KW-0496">Mitochondrion</keyword>
<keyword id="KW-0999">Mitochondrion inner membrane</keyword>
<keyword id="KW-1185">Reference proteome</keyword>
<keyword id="KW-0809">Transit peptide</keyword>
<keyword id="KW-0812">Transmembrane</keyword>
<keyword id="KW-1133">Transmembrane helix</keyword>
<gene>
    <name evidence="7 8" type="primary">Dnajc30</name>
    <name evidence="6" type="synonym">Wbscr18</name>
</gene>
<evidence type="ECO:0000250" key="1">
    <source>
        <dbReference type="UniProtKB" id="Q96LL9"/>
    </source>
</evidence>
<evidence type="ECO:0000255" key="2"/>
<evidence type="ECO:0000255" key="3">
    <source>
        <dbReference type="PROSITE-ProRule" id="PRU00286"/>
    </source>
</evidence>
<evidence type="ECO:0000256" key="4">
    <source>
        <dbReference type="SAM" id="MobiDB-lite"/>
    </source>
</evidence>
<evidence type="ECO:0000269" key="5">
    <source>
    </source>
</evidence>
<evidence type="ECO:0000303" key="6">
    <source>
    </source>
</evidence>
<evidence type="ECO:0000303" key="7">
    <source>
    </source>
</evidence>
<evidence type="ECO:0000312" key="8">
    <source>
        <dbReference type="MGI" id="MGI:1913364"/>
    </source>
</evidence>
<name>DJC30_MOUSE</name>